<reference key="1">
    <citation type="journal article" date="2003" name="Nat. Biotechnol.">
        <title>The genome sequence of the entomopathogenic bacterium Photorhabdus luminescens.</title>
        <authorList>
            <person name="Duchaud E."/>
            <person name="Rusniok C."/>
            <person name="Frangeul L."/>
            <person name="Buchrieser C."/>
            <person name="Givaudan A."/>
            <person name="Taourit S."/>
            <person name="Bocs S."/>
            <person name="Boursaux-Eude C."/>
            <person name="Chandler M."/>
            <person name="Charles J.-F."/>
            <person name="Dassa E."/>
            <person name="Derose R."/>
            <person name="Derzelle S."/>
            <person name="Freyssinet G."/>
            <person name="Gaudriault S."/>
            <person name="Medigue C."/>
            <person name="Lanois A."/>
            <person name="Powell K."/>
            <person name="Siguier P."/>
            <person name="Vincent R."/>
            <person name="Wingate V."/>
            <person name="Zouine M."/>
            <person name="Glaser P."/>
            <person name="Boemare N."/>
            <person name="Danchin A."/>
            <person name="Kunst F."/>
        </authorList>
    </citation>
    <scope>NUCLEOTIDE SEQUENCE [LARGE SCALE GENOMIC DNA]</scope>
    <source>
        <strain>DSM 15139 / CIP 105565 / TT01</strain>
    </source>
</reference>
<accession>Q7NA79</accession>
<keyword id="KW-0067">ATP-binding</keyword>
<keyword id="KW-0997">Cell inner membrane</keyword>
<keyword id="KW-1003">Cell membrane</keyword>
<keyword id="KW-0472">Membrane</keyword>
<keyword id="KW-0547">Nucleotide-binding</keyword>
<keyword id="KW-1185">Reference proteome</keyword>
<keyword id="KW-0677">Repeat</keyword>
<keyword id="KW-0762">Sugar transport</keyword>
<keyword id="KW-1278">Translocase</keyword>
<keyword id="KW-0813">Transport</keyword>
<name>RBSA_PHOLL</name>
<evidence type="ECO:0000255" key="1">
    <source>
        <dbReference type="HAMAP-Rule" id="MF_01716"/>
    </source>
</evidence>
<proteinExistence type="inferred from homology"/>
<comment type="function">
    <text evidence="1">Part of the ABC transporter complex RbsABC involved in ribose import. Responsible for energy coupling to the transport system.</text>
</comment>
<comment type="catalytic activity">
    <reaction evidence="1">
        <text>D-ribose(out) + ATP + H2O = D-ribose(in) + ADP + phosphate + H(+)</text>
        <dbReference type="Rhea" id="RHEA:29903"/>
        <dbReference type="ChEBI" id="CHEBI:15377"/>
        <dbReference type="ChEBI" id="CHEBI:15378"/>
        <dbReference type="ChEBI" id="CHEBI:30616"/>
        <dbReference type="ChEBI" id="CHEBI:43474"/>
        <dbReference type="ChEBI" id="CHEBI:47013"/>
        <dbReference type="ChEBI" id="CHEBI:456216"/>
        <dbReference type="EC" id="7.5.2.7"/>
    </reaction>
</comment>
<comment type="subunit">
    <text evidence="1">The complex is composed of an ATP-binding protein (RbsA), two transmembrane proteins (RbsC) and a solute-binding protein (RbsB).</text>
</comment>
<comment type="subcellular location">
    <subcellularLocation>
        <location evidence="1">Cell inner membrane</location>
        <topology evidence="1">Peripheral membrane protein</topology>
    </subcellularLocation>
</comment>
<comment type="similarity">
    <text evidence="1">Belongs to the ABC transporter superfamily. Ribose importer (TC 3.A.1.2.1) family.</text>
</comment>
<dbReference type="EC" id="7.5.2.7" evidence="1"/>
<dbReference type="EMBL" id="BX571859">
    <property type="protein sequence ID" value="CAE12351.1"/>
    <property type="molecule type" value="Genomic_DNA"/>
</dbReference>
<dbReference type="RefSeq" id="WP_011144468.1">
    <property type="nucleotide sequence ID" value="NC_005126.1"/>
</dbReference>
<dbReference type="SMR" id="Q7NA79"/>
<dbReference type="STRING" id="243265.plu0056"/>
<dbReference type="GeneID" id="48846356"/>
<dbReference type="KEGG" id="plu:plu0056"/>
<dbReference type="eggNOG" id="COG1129">
    <property type="taxonomic scope" value="Bacteria"/>
</dbReference>
<dbReference type="HOGENOM" id="CLU_000604_92_3_6"/>
<dbReference type="OrthoDB" id="9776369at2"/>
<dbReference type="Proteomes" id="UP000002514">
    <property type="component" value="Chromosome"/>
</dbReference>
<dbReference type="GO" id="GO:0005886">
    <property type="term" value="C:plasma membrane"/>
    <property type="evidence" value="ECO:0007669"/>
    <property type="project" value="UniProtKB-SubCell"/>
</dbReference>
<dbReference type="GO" id="GO:0015611">
    <property type="term" value="F:ABC-type D-ribose transporter activity"/>
    <property type="evidence" value="ECO:0007669"/>
    <property type="project" value="UniProtKB-EC"/>
</dbReference>
<dbReference type="GO" id="GO:0005524">
    <property type="term" value="F:ATP binding"/>
    <property type="evidence" value="ECO:0007669"/>
    <property type="project" value="UniProtKB-KW"/>
</dbReference>
<dbReference type="GO" id="GO:0016887">
    <property type="term" value="F:ATP hydrolysis activity"/>
    <property type="evidence" value="ECO:0007669"/>
    <property type="project" value="InterPro"/>
</dbReference>
<dbReference type="CDD" id="cd03216">
    <property type="entry name" value="ABC_Carb_Monos_I"/>
    <property type="match status" value="1"/>
</dbReference>
<dbReference type="CDD" id="cd03215">
    <property type="entry name" value="ABC_Carb_Monos_II"/>
    <property type="match status" value="1"/>
</dbReference>
<dbReference type="FunFam" id="3.40.50.300:FF:000126">
    <property type="entry name" value="Galactose/methyl galactoside import ATP-binding protein MglA"/>
    <property type="match status" value="1"/>
</dbReference>
<dbReference type="FunFam" id="3.40.50.300:FF:000127">
    <property type="entry name" value="Ribose import ATP-binding protein RbsA"/>
    <property type="match status" value="1"/>
</dbReference>
<dbReference type="Gene3D" id="3.40.50.300">
    <property type="entry name" value="P-loop containing nucleotide triphosphate hydrolases"/>
    <property type="match status" value="2"/>
</dbReference>
<dbReference type="InterPro" id="IPR003593">
    <property type="entry name" value="AAA+_ATPase"/>
</dbReference>
<dbReference type="InterPro" id="IPR050107">
    <property type="entry name" value="ABC_carbohydrate_import_ATPase"/>
</dbReference>
<dbReference type="InterPro" id="IPR003439">
    <property type="entry name" value="ABC_transporter-like_ATP-bd"/>
</dbReference>
<dbReference type="InterPro" id="IPR017871">
    <property type="entry name" value="ABC_transporter-like_CS"/>
</dbReference>
<dbReference type="InterPro" id="IPR027417">
    <property type="entry name" value="P-loop_NTPase"/>
</dbReference>
<dbReference type="NCBIfam" id="NF008030">
    <property type="entry name" value="PRK10762.1"/>
    <property type="match status" value="1"/>
</dbReference>
<dbReference type="PANTHER" id="PTHR43790">
    <property type="entry name" value="CARBOHYDRATE TRANSPORT ATP-BINDING PROTEIN MG119-RELATED"/>
    <property type="match status" value="1"/>
</dbReference>
<dbReference type="PANTHER" id="PTHR43790:SF3">
    <property type="entry name" value="D-ALLOSE IMPORT ATP-BINDING PROTEIN ALSA-RELATED"/>
    <property type="match status" value="1"/>
</dbReference>
<dbReference type="Pfam" id="PF00005">
    <property type="entry name" value="ABC_tran"/>
    <property type="match status" value="2"/>
</dbReference>
<dbReference type="SMART" id="SM00382">
    <property type="entry name" value="AAA"/>
    <property type="match status" value="2"/>
</dbReference>
<dbReference type="SUPFAM" id="SSF52540">
    <property type="entry name" value="P-loop containing nucleoside triphosphate hydrolases"/>
    <property type="match status" value="2"/>
</dbReference>
<dbReference type="PROSITE" id="PS00211">
    <property type="entry name" value="ABC_TRANSPORTER_1"/>
    <property type="match status" value="1"/>
</dbReference>
<dbReference type="PROSITE" id="PS50893">
    <property type="entry name" value="ABC_TRANSPORTER_2"/>
    <property type="match status" value="2"/>
</dbReference>
<dbReference type="PROSITE" id="PS51254">
    <property type="entry name" value="RBSA"/>
    <property type="match status" value="1"/>
</dbReference>
<feature type="chain" id="PRO_0000261078" description="Ribose import ATP-binding protein RbsA">
    <location>
        <begin position="1"/>
        <end position="501"/>
    </location>
</feature>
<feature type="domain" description="ABC transporter 1" evidence="1">
    <location>
        <begin position="5"/>
        <end position="241"/>
    </location>
</feature>
<feature type="domain" description="ABC transporter 2" evidence="1">
    <location>
        <begin position="249"/>
        <end position="495"/>
    </location>
</feature>
<feature type="binding site" evidence="1">
    <location>
        <begin position="37"/>
        <end position="44"/>
    </location>
    <ligand>
        <name>ATP</name>
        <dbReference type="ChEBI" id="CHEBI:30616"/>
    </ligand>
</feature>
<sequence length="501" mass="55323">MQPVLELKGISKSFPGVKALSGAALRVYPGKVMALVGENGAGKSTMMKVLTGIYTRDTGTVHYLGKEVIFSGPRSSQEAGIGIIHQELNLIPQLTIAENIFLGREFVNKFGAIDWRKMYQEADRLLKKLNLSYSSHRLVAELSIGDQQMVEIAKVLSFKSKVIIMDEPTDALTDTETESLFRVIYELKSQRCGIVYISHRLREIFEICDDVTVFRDGQFIGEKSVKELKEETLIEMMVGRKLEDQYPRLNLPRGKKRLEVKQISGPGVTNASFSLYSGEILGISGLMGAGRTELMKIIYGALPKTQGQITLDGTPIVIRNPQDGLACGIVYISEDRKRDGLVLGMSIKDNMSLTALRYFSNRLGGLNHKEEQNAVSDFIKLFSIKTPSMGQVIGLLSGGNQQKVAIARGLMTRPKVLILDEPTRGVDVGAKKEIYQLINQFKKEGLSIILVSSEMPEVIGMSDRILVMCEGQISGEFFAEQATQEILMAAAVGKQYGAIQE</sequence>
<gene>
    <name evidence="1" type="primary">rbsA</name>
    <name type="ordered locus">plu0056</name>
</gene>
<protein>
    <recommendedName>
        <fullName evidence="1">Ribose import ATP-binding protein RbsA</fullName>
        <ecNumber evidence="1">7.5.2.7</ecNumber>
    </recommendedName>
</protein>
<organism>
    <name type="scientific">Photorhabdus laumondii subsp. laumondii (strain DSM 15139 / CIP 105565 / TT01)</name>
    <name type="common">Photorhabdus luminescens subsp. laumondii</name>
    <dbReference type="NCBI Taxonomy" id="243265"/>
    <lineage>
        <taxon>Bacteria</taxon>
        <taxon>Pseudomonadati</taxon>
        <taxon>Pseudomonadota</taxon>
        <taxon>Gammaproteobacteria</taxon>
        <taxon>Enterobacterales</taxon>
        <taxon>Morganellaceae</taxon>
        <taxon>Photorhabdus</taxon>
    </lineage>
</organism>